<name>Y308_METJA</name>
<dbReference type="EMBL" id="L77117">
    <property type="protein sequence ID" value="AAB98294.1"/>
    <property type="molecule type" value="Genomic_DNA"/>
</dbReference>
<dbReference type="PIR" id="E64338">
    <property type="entry name" value="E64338"/>
</dbReference>
<dbReference type="RefSeq" id="WP_010869806.1">
    <property type="nucleotide sequence ID" value="NC_000909.1"/>
</dbReference>
<dbReference type="STRING" id="243232.MJ_0308"/>
<dbReference type="PaxDb" id="243232-MJ_0308"/>
<dbReference type="EnsemblBacteria" id="AAB98294">
    <property type="protein sequence ID" value="AAB98294"/>
    <property type="gene ID" value="MJ_0308"/>
</dbReference>
<dbReference type="GeneID" id="1451163"/>
<dbReference type="KEGG" id="mja:MJ_0308"/>
<dbReference type="eggNOG" id="arCOG02289">
    <property type="taxonomic scope" value="Archaea"/>
</dbReference>
<dbReference type="HOGENOM" id="CLU_074324_1_0_2"/>
<dbReference type="InParanoid" id="Q57756"/>
<dbReference type="OrthoDB" id="89232at2157"/>
<dbReference type="PhylomeDB" id="Q57756"/>
<dbReference type="Proteomes" id="UP000000805">
    <property type="component" value="Chromosome"/>
</dbReference>
<dbReference type="InterPro" id="IPR003748">
    <property type="entry name" value="DUF169"/>
</dbReference>
<dbReference type="PANTHER" id="PTHR37954">
    <property type="entry name" value="BLL4979 PROTEIN"/>
    <property type="match status" value="1"/>
</dbReference>
<dbReference type="PANTHER" id="PTHR37954:SF3">
    <property type="entry name" value="DUF169 DOMAIN-CONTAINING PROTEIN"/>
    <property type="match status" value="1"/>
</dbReference>
<dbReference type="Pfam" id="PF02596">
    <property type="entry name" value="DUF169"/>
    <property type="match status" value="1"/>
</dbReference>
<feature type="chain" id="PRO_0000106785" description="Uncharacterized protein MJ0308">
    <location>
        <begin position="1"/>
        <end position="233"/>
    </location>
</feature>
<organism>
    <name type="scientific">Methanocaldococcus jannaschii (strain ATCC 43067 / DSM 2661 / JAL-1 / JCM 10045 / NBRC 100440)</name>
    <name type="common">Methanococcus jannaschii</name>
    <dbReference type="NCBI Taxonomy" id="243232"/>
    <lineage>
        <taxon>Archaea</taxon>
        <taxon>Methanobacteriati</taxon>
        <taxon>Methanobacteriota</taxon>
        <taxon>Methanomada group</taxon>
        <taxon>Methanococci</taxon>
        <taxon>Methanococcales</taxon>
        <taxon>Methanocaldococcaceae</taxon>
        <taxon>Methanocaldococcus</taxon>
    </lineage>
</organism>
<keyword id="KW-1185">Reference proteome</keyword>
<accession>Q57756</accession>
<gene>
    <name type="ordered locus">MJ0308</name>
</gene>
<proteinExistence type="predicted"/>
<reference key="1">
    <citation type="journal article" date="1996" name="Science">
        <title>Complete genome sequence of the methanogenic archaeon, Methanococcus jannaschii.</title>
        <authorList>
            <person name="Bult C.J."/>
            <person name="White O."/>
            <person name="Olsen G.J."/>
            <person name="Zhou L."/>
            <person name="Fleischmann R.D."/>
            <person name="Sutton G.G."/>
            <person name="Blake J.A."/>
            <person name="FitzGerald L.M."/>
            <person name="Clayton R.A."/>
            <person name="Gocayne J.D."/>
            <person name="Kerlavage A.R."/>
            <person name="Dougherty B.A."/>
            <person name="Tomb J.-F."/>
            <person name="Adams M.D."/>
            <person name="Reich C.I."/>
            <person name="Overbeek R."/>
            <person name="Kirkness E.F."/>
            <person name="Weinstock K.G."/>
            <person name="Merrick J.M."/>
            <person name="Glodek A."/>
            <person name="Scott J.L."/>
            <person name="Geoghagen N.S.M."/>
            <person name="Weidman J.F."/>
            <person name="Fuhrmann J.L."/>
            <person name="Nguyen D."/>
            <person name="Utterback T.R."/>
            <person name="Kelley J.M."/>
            <person name="Peterson J.D."/>
            <person name="Sadow P.W."/>
            <person name="Hanna M.C."/>
            <person name="Cotton M.D."/>
            <person name="Roberts K.M."/>
            <person name="Hurst M.A."/>
            <person name="Kaine B.P."/>
            <person name="Borodovsky M."/>
            <person name="Klenk H.-P."/>
            <person name="Fraser C.M."/>
            <person name="Smith H.O."/>
            <person name="Woese C.R."/>
            <person name="Venter J.C."/>
        </authorList>
    </citation>
    <scope>NUCLEOTIDE SEQUENCE [LARGE SCALE GENOMIC DNA]</scope>
    <source>
        <strain>ATCC 43067 / DSM 2661 / JAL-1 / JCM 10045 / NBRC 100440</strain>
    </source>
</reference>
<protein>
    <recommendedName>
        <fullName>Uncharacterized protein MJ0308</fullName>
    </recommendedName>
</protein>
<sequence length="233" mass="26244">MDVNEIRENAKKLMELMMLDKPFVAVKLAKSKEEIPEGYETLDEEKRHCEMIQMARLERKKLYATVDKHLCKGGAYAMGVFRNPPEPLATGKLYVKLGNFKDEEAAKKTVDAIPKVEEEIYATVYAPLDETDFIPDSIVFIGEPLYALRLVQAILYHKGGRFQADFSGIQSLCADAVAAVYTRKAPNMTLGCNGSRKYAGIKPEEVVVAFPPEKLKDIVEAIEHFRQVWTCGH</sequence>